<evidence type="ECO:0000255" key="1">
    <source>
        <dbReference type="HAMAP-Rule" id="MF_00075"/>
    </source>
</evidence>
<name>IF1_RICAH</name>
<protein>
    <recommendedName>
        <fullName evidence="1">Translation initiation factor IF-1</fullName>
    </recommendedName>
</protein>
<reference key="1">
    <citation type="submission" date="2007-09" db="EMBL/GenBank/DDBJ databases">
        <title>Complete genome sequence of Rickettsia akari.</title>
        <authorList>
            <person name="Madan A."/>
            <person name="Fahey J."/>
            <person name="Helton E."/>
            <person name="Ketteman M."/>
            <person name="Madan A."/>
            <person name="Rodrigues S."/>
            <person name="Sanchez A."/>
            <person name="Whiting M."/>
            <person name="Dasch G."/>
            <person name="Eremeeva M."/>
        </authorList>
    </citation>
    <scope>NUCLEOTIDE SEQUENCE [LARGE SCALE GENOMIC DNA]</scope>
    <source>
        <strain>Hartford</strain>
    </source>
</reference>
<keyword id="KW-0963">Cytoplasm</keyword>
<keyword id="KW-0396">Initiation factor</keyword>
<keyword id="KW-0648">Protein biosynthesis</keyword>
<keyword id="KW-0694">RNA-binding</keyword>
<keyword id="KW-0699">rRNA-binding</keyword>
<sequence>MSKDDLIQFTGTILELLPNATFRVKLENDHGIIAHTSGRMRKNRIRILLGDKVTVEMTPYDLTKGRVIHRH</sequence>
<dbReference type="EMBL" id="CP000847">
    <property type="protein sequence ID" value="ABV75487.1"/>
    <property type="molecule type" value="Genomic_DNA"/>
</dbReference>
<dbReference type="RefSeq" id="WP_012150116.1">
    <property type="nucleotide sequence ID" value="NC_009881.1"/>
</dbReference>
<dbReference type="SMR" id="A8GQ12"/>
<dbReference type="STRING" id="293614.A1C_06300"/>
<dbReference type="KEGG" id="rak:A1C_06300"/>
<dbReference type="eggNOG" id="COG0361">
    <property type="taxonomic scope" value="Bacteria"/>
</dbReference>
<dbReference type="HOGENOM" id="CLU_151267_1_0_5"/>
<dbReference type="Proteomes" id="UP000006830">
    <property type="component" value="Chromosome"/>
</dbReference>
<dbReference type="GO" id="GO:0005829">
    <property type="term" value="C:cytosol"/>
    <property type="evidence" value="ECO:0007669"/>
    <property type="project" value="TreeGrafter"/>
</dbReference>
<dbReference type="GO" id="GO:0043022">
    <property type="term" value="F:ribosome binding"/>
    <property type="evidence" value="ECO:0007669"/>
    <property type="project" value="UniProtKB-UniRule"/>
</dbReference>
<dbReference type="GO" id="GO:0019843">
    <property type="term" value="F:rRNA binding"/>
    <property type="evidence" value="ECO:0007669"/>
    <property type="project" value="UniProtKB-UniRule"/>
</dbReference>
<dbReference type="GO" id="GO:0003743">
    <property type="term" value="F:translation initiation factor activity"/>
    <property type="evidence" value="ECO:0007669"/>
    <property type="project" value="UniProtKB-UniRule"/>
</dbReference>
<dbReference type="CDD" id="cd04451">
    <property type="entry name" value="S1_IF1"/>
    <property type="match status" value="1"/>
</dbReference>
<dbReference type="FunFam" id="2.40.50.140:FF:000002">
    <property type="entry name" value="Translation initiation factor IF-1"/>
    <property type="match status" value="1"/>
</dbReference>
<dbReference type="Gene3D" id="2.40.50.140">
    <property type="entry name" value="Nucleic acid-binding proteins"/>
    <property type="match status" value="1"/>
</dbReference>
<dbReference type="HAMAP" id="MF_00075">
    <property type="entry name" value="IF_1"/>
    <property type="match status" value="1"/>
</dbReference>
<dbReference type="InterPro" id="IPR012340">
    <property type="entry name" value="NA-bd_OB-fold"/>
</dbReference>
<dbReference type="InterPro" id="IPR006196">
    <property type="entry name" value="RNA-binding_domain_S1_IF1"/>
</dbReference>
<dbReference type="InterPro" id="IPR004368">
    <property type="entry name" value="TIF_IF1"/>
</dbReference>
<dbReference type="NCBIfam" id="TIGR00008">
    <property type="entry name" value="infA"/>
    <property type="match status" value="1"/>
</dbReference>
<dbReference type="PANTHER" id="PTHR33370">
    <property type="entry name" value="TRANSLATION INITIATION FACTOR IF-1, CHLOROPLASTIC"/>
    <property type="match status" value="1"/>
</dbReference>
<dbReference type="PANTHER" id="PTHR33370:SF1">
    <property type="entry name" value="TRANSLATION INITIATION FACTOR IF-1, CHLOROPLASTIC"/>
    <property type="match status" value="1"/>
</dbReference>
<dbReference type="Pfam" id="PF01176">
    <property type="entry name" value="eIF-1a"/>
    <property type="match status" value="1"/>
</dbReference>
<dbReference type="SUPFAM" id="SSF50249">
    <property type="entry name" value="Nucleic acid-binding proteins"/>
    <property type="match status" value="1"/>
</dbReference>
<dbReference type="PROSITE" id="PS50832">
    <property type="entry name" value="S1_IF1_TYPE"/>
    <property type="match status" value="1"/>
</dbReference>
<organism>
    <name type="scientific">Rickettsia akari (strain Hartford)</name>
    <dbReference type="NCBI Taxonomy" id="293614"/>
    <lineage>
        <taxon>Bacteria</taxon>
        <taxon>Pseudomonadati</taxon>
        <taxon>Pseudomonadota</taxon>
        <taxon>Alphaproteobacteria</taxon>
        <taxon>Rickettsiales</taxon>
        <taxon>Rickettsiaceae</taxon>
        <taxon>Rickettsieae</taxon>
        <taxon>Rickettsia</taxon>
        <taxon>spotted fever group</taxon>
    </lineage>
</organism>
<comment type="function">
    <text evidence="1">One of the essential components for the initiation of protein synthesis. Stabilizes the binding of IF-2 and IF-3 on the 30S subunit to which N-formylmethionyl-tRNA(fMet) subsequently binds. Helps modulate mRNA selection, yielding the 30S pre-initiation complex (PIC). Upon addition of the 50S ribosomal subunit IF-1, IF-2 and IF-3 are released leaving the mature 70S translation initiation complex.</text>
</comment>
<comment type="subunit">
    <text evidence="1">Component of the 30S ribosomal translation pre-initiation complex which assembles on the 30S ribosome in the order IF-2 and IF-3, IF-1 and N-formylmethionyl-tRNA(fMet); mRNA recruitment can occur at any time during PIC assembly.</text>
</comment>
<comment type="subcellular location">
    <subcellularLocation>
        <location evidence="1">Cytoplasm</location>
    </subcellularLocation>
</comment>
<comment type="similarity">
    <text evidence="1">Belongs to the IF-1 family.</text>
</comment>
<proteinExistence type="inferred from homology"/>
<feature type="chain" id="PRO_0000338902" description="Translation initiation factor IF-1">
    <location>
        <begin position="1"/>
        <end position="71"/>
    </location>
</feature>
<feature type="domain" description="S1-like" evidence="1">
    <location>
        <begin position="1"/>
        <end position="71"/>
    </location>
</feature>
<gene>
    <name evidence="1" type="primary">infA</name>
    <name type="ordered locus">A1C_06300</name>
</gene>
<accession>A8GQ12</accession>